<dbReference type="EC" id="4.1.1.37" evidence="1"/>
<dbReference type="EMBL" id="AM233362">
    <property type="protein sequence ID" value="CAJ80251.1"/>
    <property type="molecule type" value="Genomic_DNA"/>
</dbReference>
<dbReference type="RefSeq" id="WP_003017361.1">
    <property type="nucleotide sequence ID" value="NZ_CP009694.1"/>
</dbReference>
<dbReference type="SMR" id="Q2A1G5"/>
<dbReference type="KEGG" id="ftl:FTL_1812"/>
<dbReference type="UniPathway" id="UPA00251">
    <property type="reaction ID" value="UER00321"/>
</dbReference>
<dbReference type="Proteomes" id="UP000001944">
    <property type="component" value="Chromosome"/>
</dbReference>
<dbReference type="GO" id="GO:0005829">
    <property type="term" value="C:cytosol"/>
    <property type="evidence" value="ECO:0007669"/>
    <property type="project" value="TreeGrafter"/>
</dbReference>
<dbReference type="GO" id="GO:0004853">
    <property type="term" value="F:uroporphyrinogen decarboxylase activity"/>
    <property type="evidence" value="ECO:0007669"/>
    <property type="project" value="UniProtKB-UniRule"/>
</dbReference>
<dbReference type="GO" id="GO:0006782">
    <property type="term" value="P:protoporphyrinogen IX biosynthetic process"/>
    <property type="evidence" value="ECO:0007669"/>
    <property type="project" value="UniProtKB-UniRule"/>
</dbReference>
<dbReference type="CDD" id="cd00717">
    <property type="entry name" value="URO-D"/>
    <property type="match status" value="1"/>
</dbReference>
<dbReference type="FunFam" id="3.20.20.210:FF:000008">
    <property type="entry name" value="Uroporphyrinogen decarboxylase"/>
    <property type="match status" value="1"/>
</dbReference>
<dbReference type="Gene3D" id="3.20.20.210">
    <property type="match status" value="1"/>
</dbReference>
<dbReference type="HAMAP" id="MF_00218">
    <property type="entry name" value="URO_D"/>
    <property type="match status" value="1"/>
</dbReference>
<dbReference type="InterPro" id="IPR038071">
    <property type="entry name" value="UROD/MetE-like_sf"/>
</dbReference>
<dbReference type="InterPro" id="IPR006361">
    <property type="entry name" value="Uroporphyrinogen_deCO2ase_HemE"/>
</dbReference>
<dbReference type="InterPro" id="IPR000257">
    <property type="entry name" value="Uroporphyrinogen_deCOase"/>
</dbReference>
<dbReference type="NCBIfam" id="TIGR01464">
    <property type="entry name" value="hemE"/>
    <property type="match status" value="1"/>
</dbReference>
<dbReference type="PANTHER" id="PTHR21091">
    <property type="entry name" value="METHYLTETRAHYDROFOLATE:HOMOCYSTEINE METHYLTRANSFERASE RELATED"/>
    <property type="match status" value="1"/>
</dbReference>
<dbReference type="PANTHER" id="PTHR21091:SF169">
    <property type="entry name" value="UROPORPHYRINOGEN DECARBOXYLASE"/>
    <property type="match status" value="1"/>
</dbReference>
<dbReference type="Pfam" id="PF01208">
    <property type="entry name" value="URO-D"/>
    <property type="match status" value="1"/>
</dbReference>
<dbReference type="SUPFAM" id="SSF51726">
    <property type="entry name" value="UROD/MetE-like"/>
    <property type="match status" value="1"/>
</dbReference>
<dbReference type="PROSITE" id="PS00906">
    <property type="entry name" value="UROD_1"/>
    <property type="match status" value="1"/>
</dbReference>
<dbReference type="PROSITE" id="PS00907">
    <property type="entry name" value="UROD_2"/>
    <property type="match status" value="1"/>
</dbReference>
<comment type="function">
    <text evidence="1">Catalyzes the decarboxylation of four acetate groups of uroporphyrinogen-III to yield coproporphyrinogen-III.</text>
</comment>
<comment type="catalytic activity">
    <reaction evidence="1">
        <text>uroporphyrinogen III + 4 H(+) = coproporphyrinogen III + 4 CO2</text>
        <dbReference type="Rhea" id="RHEA:19865"/>
        <dbReference type="ChEBI" id="CHEBI:15378"/>
        <dbReference type="ChEBI" id="CHEBI:16526"/>
        <dbReference type="ChEBI" id="CHEBI:57308"/>
        <dbReference type="ChEBI" id="CHEBI:57309"/>
        <dbReference type="EC" id="4.1.1.37"/>
    </reaction>
</comment>
<comment type="pathway">
    <text evidence="1">Porphyrin-containing compound metabolism; protoporphyrin-IX biosynthesis; coproporphyrinogen-III from 5-aminolevulinate: step 4/4.</text>
</comment>
<comment type="subunit">
    <text evidence="1">Homodimer.</text>
</comment>
<comment type="subcellular location">
    <subcellularLocation>
        <location evidence="1">Cytoplasm</location>
    </subcellularLocation>
</comment>
<comment type="similarity">
    <text evidence="1">Belongs to the uroporphyrinogen decarboxylase family.</text>
</comment>
<name>DCUP_FRATH</name>
<keyword id="KW-0963">Cytoplasm</keyword>
<keyword id="KW-0210">Decarboxylase</keyword>
<keyword id="KW-0456">Lyase</keyword>
<keyword id="KW-0627">Porphyrin biosynthesis</keyword>
<keyword id="KW-1185">Reference proteome</keyword>
<accession>Q2A1G5</accession>
<sequence>MRKLFLDAFGEKKLDKPPVWIMRQAGRYLPEYRAVRVKFDNFMDMCRNADACCEVALHPLQRYDLDAAIVFSDILTIPEAMGMDLKFIKGAGPVFSEPIQSQKDLDKLKSIEDSIGSLDYVYNAVKTTSSAINVPLIGFTGSPWTLAAYMIEGSGSKQFNKLRKMMYANPQLMHSLLQRLADITIIYLLEQVKAGASSVMIFDTWGGILPLEHYKNFSLKYMEYIAKNVKQKINIPIVFFTKGGSNFFEEIKDKSCDGVGVDWSVTLKQARHRIGVGKVLQGNFDPAFLYGSKQSIRETVRANIEFIQSDKLNNYIVNLGHGIYPDIDPDSVRVMIDAIREFSA</sequence>
<organism>
    <name type="scientific">Francisella tularensis subsp. holarctica (strain LVS)</name>
    <dbReference type="NCBI Taxonomy" id="376619"/>
    <lineage>
        <taxon>Bacteria</taxon>
        <taxon>Pseudomonadati</taxon>
        <taxon>Pseudomonadota</taxon>
        <taxon>Gammaproteobacteria</taxon>
        <taxon>Thiotrichales</taxon>
        <taxon>Francisellaceae</taxon>
        <taxon>Francisella</taxon>
    </lineage>
</organism>
<gene>
    <name evidence="1" type="primary">hemE</name>
    <name type="ordered locus">FTL_1812</name>
</gene>
<reference key="1">
    <citation type="submission" date="2006-03" db="EMBL/GenBank/DDBJ databases">
        <title>Complete genome sequence of Francisella tularensis LVS (Live Vaccine Strain).</title>
        <authorList>
            <person name="Chain P."/>
            <person name="Larimer F."/>
            <person name="Land M."/>
            <person name="Stilwagen S."/>
            <person name="Larsson P."/>
            <person name="Bearden S."/>
            <person name="Chu M."/>
            <person name="Oyston P."/>
            <person name="Forsman M."/>
            <person name="Andersson S."/>
            <person name="Lindler L."/>
            <person name="Titball R."/>
            <person name="Garcia E."/>
        </authorList>
    </citation>
    <scope>NUCLEOTIDE SEQUENCE [LARGE SCALE GENOMIC DNA]</scope>
    <source>
        <strain>LVS</strain>
    </source>
</reference>
<evidence type="ECO:0000255" key="1">
    <source>
        <dbReference type="HAMAP-Rule" id="MF_00218"/>
    </source>
</evidence>
<protein>
    <recommendedName>
        <fullName evidence="1">Uroporphyrinogen decarboxylase</fullName>
        <shortName evidence="1">UPD</shortName>
        <shortName evidence="1">URO-D</shortName>
        <ecNumber evidence="1">4.1.1.37</ecNumber>
    </recommendedName>
</protein>
<feature type="chain" id="PRO_0000325640" description="Uroporphyrinogen decarboxylase">
    <location>
        <begin position="1"/>
        <end position="344"/>
    </location>
</feature>
<feature type="binding site" evidence="1">
    <location>
        <begin position="23"/>
        <end position="27"/>
    </location>
    <ligand>
        <name>substrate</name>
    </ligand>
</feature>
<feature type="binding site" evidence="1">
    <location>
        <position position="73"/>
    </location>
    <ligand>
        <name>substrate</name>
    </ligand>
</feature>
<feature type="binding site" evidence="1">
    <location>
        <position position="149"/>
    </location>
    <ligand>
        <name>substrate</name>
    </ligand>
</feature>
<feature type="binding site" evidence="1">
    <location>
        <position position="204"/>
    </location>
    <ligand>
        <name>substrate</name>
    </ligand>
</feature>
<feature type="binding site" evidence="1">
    <location>
        <position position="321"/>
    </location>
    <ligand>
        <name>substrate</name>
    </ligand>
</feature>
<feature type="site" description="Transition state stabilizer" evidence="1">
    <location>
        <position position="73"/>
    </location>
</feature>
<proteinExistence type="inferred from homology"/>